<name>CCNA2_HUMAN</name>
<accession>P20248</accession>
<accession>A8K7B6</accession>
<accession>Q2M3U6</accession>
<accession>Q4W5P4</accession>
<accession>Q6LER8</accession>
<proteinExistence type="evidence at protein level"/>
<organism>
    <name type="scientific">Homo sapiens</name>
    <name type="common">Human</name>
    <dbReference type="NCBI Taxonomy" id="9606"/>
    <lineage>
        <taxon>Eukaryota</taxon>
        <taxon>Metazoa</taxon>
        <taxon>Chordata</taxon>
        <taxon>Craniata</taxon>
        <taxon>Vertebrata</taxon>
        <taxon>Euteleostomi</taxon>
        <taxon>Mammalia</taxon>
        <taxon>Eutheria</taxon>
        <taxon>Euarchontoglires</taxon>
        <taxon>Primates</taxon>
        <taxon>Haplorrhini</taxon>
        <taxon>Catarrhini</taxon>
        <taxon>Hominidae</taxon>
        <taxon>Homo</taxon>
    </lineage>
</organism>
<protein>
    <recommendedName>
        <fullName evidence="20">Cyclin-A2</fullName>
        <shortName evidence="18">Cyclin-A</shortName>
    </recommendedName>
    <alternativeName>
        <fullName evidence="18">Cyclin A</fullName>
    </alternativeName>
</protein>
<evidence type="ECO:0000256" key="1">
    <source>
        <dbReference type="SAM" id="MobiDB-lite"/>
    </source>
</evidence>
<evidence type="ECO:0000269" key="2">
    <source>
    </source>
</evidence>
<evidence type="ECO:0000269" key="3">
    <source>
    </source>
</evidence>
<evidence type="ECO:0000269" key="4">
    <source>
    </source>
</evidence>
<evidence type="ECO:0000269" key="5">
    <source>
    </source>
</evidence>
<evidence type="ECO:0000269" key="6">
    <source>
    </source>
</evidence>
<evidence type="ECO:0000269" key="7">
    <source>
    </source>
</evidence>
<evidence type="ECO:0000269" key="8">
    <source>
    </source>
</evidence>
<evidence type="ECO:0000269" key="9">
    <source>
    </source>
</evidence>
<evidence type="ECO:0000269" key="10">
    <source>
    </source>
</evidence>
<evidence type="ECO:0000269" key="11">
    <source>
    </source>
</evidence>
<evidence type="ECO:0000269" key="12">
    <source>
    </source>
</evidence>
<evidence type="ECO:0000269" key="13">
    <source>
    </source>
</evidence>
<evidence type="ECO:0000269" key="14">
    <source>
    </source>
</evidence>
<evidence type="ECO:0000269" key="15">
    <source ref="3"/>
</evidence>
<evidence type="ECO:0000269" key="16">
    <source ref="4"/>
</evidence>
<evidence type="ECO:0000269" key="17">
    <source ref="7"/>
</evidence>
<evidence type="ECO:0000303" key="18">
    <source>
    </source>
</evidence>
<evidence type="ECO:0000305" key="19"/>
<evidence type="ECO:0000312" key="20">
    <source>
        <dbReference type="HGNC" id="HGNC:1578"/>
    </source>
</evidence>
<evidence type="ECO:0007744" key="21">
    <source>
    </source>
</evidence>
<evidence type="ECO:0007744" key="22">
    <source>
    </source>
</evidence>
<evidence type="ECO:0007744" key="23">
    <source>
    </source>
</evidence>
<evidence type="ECO:0007829" key="24">
    <source>
        <dbReference type="PDB" id="1H1P"/>
    </source>
</evidence>
<evidence type="ECO:0007829" key="25">
    <source>
        <dbReference type="PDB" id="1OL1"/>
    </source>
</evidence>
<evidence type="ECO:0007829" key="26">
    <source>
        <dbReference type="PDB" id="2C5N"/>
    </source>
</evidence>
<evidence type="ECO:0007829" key="27">
    <source>
        <dbReference type="PDB" id="4CFV"/>
    </source>
</evidence>
<evidence type="ECO:0007829" key="28">
    <source>
        <dbReference type="PDB" id="4EOJ"/>
    </source>
</evidence>
<evidence type="ECO:0007829" key="29">
    <source>
        <dbReference type="PDB" id="6ATH"/>
    </source>
</evidence>
<evidence type="ECO:0007829" key="30">
    <source>
        <dbReference type="PDB" id="6Q6G"/>
    </source>
</evidence>
<evidence type="ECO:0007829" key="31">
    <source>
        <dbReference type="PDB" id="8BYA"/>
    </source>
</evidence>
<gene>
    <name evidence="20" type="primary">CCNA2</name>
    <name evidence="20" type="synonym">CCN1</name>
    <name evidence="20" type="synonym">CCNA</name>
</gene>
<keyword id="KW-0002">3D-structure</keyword>
<keyword id="KW-0007">Acetylation</keyword>
<keyword id="KW-0131">Cell cycle</keyword>
<keyword id="KW-0132">Cell division</keyword>
<keyword id="KW-0195">Cyclin</keyword>
<keyword id="KW-0963">Cytoplasm</keyword>
<keyword id="KW-0945">Host-virus interaction</keyword>
<keyword id="KW-0498">Mitosis</keyword>
<keyword id="KW-0539">Nucleus</keyword>
<keyword id="KW-0597">Phosphoprotein</keyword>
<keyword id="KW-1267">Proteomics identification</keyword>
<keyword id="KW-1185">Reference proteome</keyword>
<keyword id="KW-0832">Ubl conjugation</keyword>
<sequence length="432" mass="48551">MLGNSAPGPATREAGSALLALQQTALQEDQENINPEKAAPVQQPRTRAALAVLKSGNPRGLAQQQRPKTRRVAPLKDLPVNDEHVTVPPWKANSKQPAFTIHVDEAEKEAQKKPAESQKIEREDALAFNSAISLPGPRKPLVPLDYPMDGSFESPHTMDMSIILEDEKPVSVNEVPDYHEDIHTYLREMEVKCKPKVGYMKKQPDITNSMRAILVDWLVEVGEEYKLQNETLHLAVNYIDRFLSSMSVLRGKLQLVGTAAMLLASKFEEIYPPEVAEFVYITDDTYTKKQVLRMEHLVLKVLTFDLAAPTVNQFLTQYFLHQQPANCKVESLAMFLGELSLIDADPYLKYLPSVIAGAAFHLALYTVTGQSWPESLIRKTGYTLESLKPCLMDLHQTYLKAPQHAQQSIREKYKNSKYHGVSLLNPPETLNL</sequence>
<feature type="chain" id="PRO_0000080338" description="Cyclin-A2">
    <location>
        <begin position="1"/>
        <end position="432"/>
    </location>
</feature>
<feature type="region of interest" description="Disordered" evidence="1">
    <location>
        <begin position="26"/>
        <end position="45"/>
    </location>
</feature>
<feature type="region of interest" description="Disordered" evidence="1">
    <location>
        <begin position="55"/>
        <end position="75"/>
    </location>
</feature>
<feature type="modified residue" description="N-acetylmethionine" evidence="22">
    <location>
        <position position="1"/>
    </location>
</feature>
<feature type="modified residue" description="Phosphoserine" evidence="22 23">
    <location>
        <position position="5"/>
    </location>
</feature>
<feature type="modified residue" description="Phosphoserine" evidence="22">
    <location>
        <position position="55"/>
    </location>
</feature>
<feature type="sequence variant" id="VAR_018819" description="In dbSNP:rs769242." evidence="3 4 6 12 15 16 17 21">
    <original>I</original>
    <variation>V</variation>
    <location>
        <position position="163"/>
    </location>
</feature>
<feature type="sequence conflict" description="In Ref. 3; CAG28620." evidence="19" ref="3">
    <original>H</original>
    <variation>R</variation>
    <location>
        <position position="156"/>
    </location>
</feature>
<feature type="turn" evidence="30">
    <location>
        <begin position="30"/>
        <end position="32"/>
    </location>
</feature>
<feature type="strand" evidence="30">
    <location>
        <begin position="54"/>
        <end position="56"/>
    </location>
</feature>
<feature type="helix" evidence="27">
    <location>
        <begin position="172"/>
        <end position="174"/>
    </location>
</feature>
<feature type="turn" evidence="29">
    <location>
        <begin position="176"/>
        <end position="178"/>
    </location>
</feature>
<feature type="helix" evidence="28">
    <location>
        <begin position="179"/>
        <end position="192"/>
    </location>
</feature>
<feature type="helix" evidence="28">
    <location>
        <begin position="199"/>
        <end position="202"/>
    </location>
</feature>
<feature type="helix" evidence="28">
    <location>
        <begin position="208"/>
        <end position="224"/>
    </location>
</feature>
<feature type="helix" evidence="28">
    <location>
        <begin position="229"/>
        <end position="243"/>
    </location>
</feature>
<feature type="helix" evidence="28">
    <location>
        <begin position="250"/>
        <end position="252"/>
    </location>
</feature>
<feature type="helix" evidence="28">
    <location>
        <begin position="253"/>
        <end position="268"/>
    </location>
</feature>
<feature type="strand" evidence="26">
    <location>
        <begin position="269"/>
        <end position="271"/>
    </location>
</feature>
<feature type="helix" evidence="28">
    <location>
        <begin position="275"/>
        <end position="281"/>
    </location>
</feature>
<feature type="turn" evidence="28">
    <location>
        <begin position="282"/>
        <end position="284"/>
    </location>
</feature>
<feature type="helix" evidence="28">
    <location>
        <begin position="288"/>
        <end position="301"/>
    </location>
</feature>
<feature type="turn" evidence="28">
    <location>
        <begin position="302"/>
        <end position="304"/>
    </location>
</feature>
<feature type="helix" evidence="28">
    <location>
        <begin position="311"/>
        <end position="319"/>
    </location>
</feature>
<feature type="strand" evidence="24">
    <location>
        <begin position="322"/>
        <end position="324"/>
    </location>
</feature>
<feature type="helix" evidence="28">
    <location>
        <begin position="327"/>
        <end position="342"/>
    </location>
</feature>
<feature type="helix" evidence="28">
    <location>
        <begin position="344"/>
        <end position="347"/>
    </location>
</feature>
<feature type="strand" evidence="31">
    <location>
        <begin position="348"/>
        <end position="350"/>
    </location>
</feature>
<feature type="helix" evidence="28">
    <location>
        <begin position="352"/>
        <end position="368"/>
    </location>
</feature>
<feature type="helix" evidence="28">
    <location>
        <begin position="374"/>
        <end position="380"/>
    </location>
</feature>
<feature type="helix" evidence="28">
    <location>
        <begin position="384"/>
        <end position="400"/>
    </location>
</feature>
<feature type="helix" evidence="28">
    <location>
        <begin position="401"/>
        <end position="403"/>
    </location>
</feature>
<feature type="strand" evidence="31">
    <location>
        <begin position="404"/>
        <end position="406"/>
    </location>
</feature>
<feature type="helix" evidence="28">
    <location>
        <begin position="408"/>
        <end position="412"/>
    </location>
</feature>
<feature type="strand" evidence="25">
    <location>
        <begin position="413"/>
        <end position="415"/>
    </location>
</feature>
<feature type="helix" evidence="28">
    <location>
        <begin position="416"/>
        <end position="418"/>
    </location>
</feature>
<feature type="helix" evidence="28">
    <location>
        <begin position="421"/>
        <end position="423"/>
    </location>
</feature>
<reference key="1">
    <citation type="journal article" date="1990" name="Nature">
        <title>Hepatitis B virus integration in a cyclin A gene in a hepatocellular carcinoma.</title>
        <authorList>
            <person name="Wang J."/>
            <person name="Chenivesse X."/>
            <person name="Henglein B."/>
            <person name="Brechot C."/>
        </authorList>
    </citation>
    <scope>NUCLEOTIDE SEQUENCE [MRNA]</scope>
    <scope>VARIANT VAL-163</scope>
</reference>
<reference key="2">
    <citation type="journal article" date="1994" name="Proc. Natl. Acad. Sci. U.S.A.">
        <title>Structure and cell cycle-regulated transcription of the human cyclin A gene.</title>
        <authorList>
            <person name="Henglein B."/>
            <person name="Chenivesse X."/>
            <person name="Wang D."/>
            <person name="Eick D."/>
            <person name="Brechot C."/>
        </authorList>
    </citation>
    <scope>NUCLEOTIDE SEQUENCE [GENOMIC DNA]</scope>
    <scope>VARIANT VAL-163</scope>
    <scope>DEVELOPMENTAL STAGE</scope>
</reference>
<reference key="3">
    <citation type="submission" date="2004-05" db="EMBL/GenBank/DDBJ databases">
        <title>Cloning of human full open reading frames in Gateway(TM) system entry vector (pDONR201).</title>
        <authorList>
            <person name="Ebert L."/>
            <person name="Schick M."/>
            <person name="Neubert P."/>
            <person name="Schatten R."/>
            <person name="Henze S."/>
            <person name="Korn B."/>
        </authorList>
    </citation>
    <scope>NUCLEOTIDE SEQUENCE [LARGE SCALE MRNA]</scope>
    <scope>VARIANT VAL-163</scope>
</reference>
<reference key="4">
    <citation type="submission" date="2002-06" db="EMBL/GenBank/DDBJ databases">
        <authorList>
            <consortium name="NIEHS SNPs program"/>
        </authorList>
    </citation>
    <scope>NUCLEOTIDE SEQUENCE [GENOMIC DNA]</scope>
    <scope>VARIANT VAL-163</scope>
</reference>
<reference key="5">
    <citation type="journal article" date="2004" name="Nat. Genet.">
        <title>Complete sequencing and characterization of 21,243 full-length human cDNAs.</title>
        <authorList>
            <person name="Ota T."/>
            <person name="Suzuki Y."/>
            <person name="Nishikawa T."/>
            <person name="Otsuki T."/>
            <person name="Sugiyama T."/>
            <person name="Irie R."/>
            <person name="Wakamatsu A."/>
            <person name="Hayashi K."/>
            <person name="Sato H."/>
            <person name="Nagai K."/>
            <person name="Kimura K."/>
            <person name="Makita H."/>
            <person name="Sekine M."/>
            <person name="Obayashi M."/>
            <person name="Nishi T."/>
            <person name="Shibahara T."/>
            <person name="Tanaka T."/>
            <person name="Ishii S."/>
            <person name="Yamamoto J."/>
            <person name="Saito K."/>
            <person name="Kawai Y."/>
            <person name="Isono Y."/>
            <person name="Nakamura Y."/>
            <person name="Nagahari K."/>
            <person name="Murakami K."/>
            <person name="Yasuda T."/>
            <person name="Iwayanagi T."/>
            <person name="Wagatsuma M."/>
            <person name="Shiratori A."/>
            <person name="Sudo H."/>
            <person name="Hosoiri T."/>
            <person name="Kaku Y."/>
            <person name="Kodaira H."/>
            <person name="Kondo H."/>
            <person name="Sugawara M."/>
            <person name="Takahashi M."/>
            <person name="Kanda K."/>
            <person name="Yokoi T."/>
            <person name="Furuya T."/>
            <person name="Kikkawa E."/>
            <person name="Omura Y."/>
            <person name="Abe K."/>
            <person name="Kamihara K."/>
            <person name="Katsuta N."/>
            <person name="Sato K."/>
            <person name="Tanikawa M."/>
            <person name="Yamazaki M."/>
            <person name="Ninomiya K."/>
            <person name="Ishibashi T."/>
            <person name="Yamashita H."/>
            <person name="Murakawa K."/>
            <person name="Fujimori K."/>
            <person name="Tanai H."/>
            <person name="Kimata M."/>
            <person name="Watanabe M."/>
            <person name="Hiraoka S."/>
            <person name="Chiba Y."/>
            <person name="Ishida S."/>
            <person name="Ono Y."/>
            <person name="Takiguchi S."/>
            <person name="Watanabe S."/>
            <person name="Yosida M."/>
            <person name="Hotuta T."/>
            <person name="Kusano J."/>
            <person name="Kanehori K."/>
            <person name="Takahashi-Fujii A."/>
            <person name="Hara H."/>
            <person name="Tanase T.-O."/>
            <person name="Nomura Y."/>
            <person name="Togiya S."/>
            <person name="Komai F."/>
            <person name="Hara R."/>
            <person name="Takeuchi K."/>
            <person name="Arita M."/>
            <person name="Imose N."/>
            <person name="Musashino K."/>
            <person name="Yuuki H."/>
            <person name="Oshima A."/>
            <person name="Sasaki N."/>
            <person name="Aotsuka S."/>
            <person name="Yoshikawa Y."/>
            <person name="Matsunawa H."/>
            <person name="Ichihara T."/>
            <person name="Shiohata N."/>
            <person name="Sano S."/>
            <person name="Moriya S."/>
            <person name="Momiyama H."/>
            <person name="Satoh N."/>
            <person name="Takami S."/>
            <person name="Terashima Y."/>
            <person name="Suzuki O."/>
            <person name="Nakagawa S."/>
            <person name="Senoh A."/>
            <person name="Mizoguchi H."/>
            <person name="Goto Y."/>
            <person name="Shimizu F."/>
            <person name="Wakebe H."/>
            <person name="Hishigaki H."/>
            <person name="Watanabe T."/>
            <person name="Sugiyama A."/>
            <person name="Takemoto M."/>
            <person name="Kawakami B."/>
            <person name="Yamazaki M."/>
            <person name="Watanabe K."/>
            <person name="Kumagai A."/>
            <person name="Itakura S."/>
            <person name="Fukuzumi Y."/>
            <person name="Fujimori Y."/>
            <person name="Komiyama M."/>
            <person name="Tashiro H."/>
            <person name="Tanigami A."/>
            <person name="Fujiwara T."/>
            <person name="Ono T."/>
            <person name="Yamada K."/>
            <person name="Fujii Y."/>
            <person name="Ozaki K."/>
            <person name="Hirao M."/>
            <person name="Ohmori Y."/>
            <person name="Kawabata A."/>
            <person name="Hikiji T."/>
            <person name="Kobatake N."/>
            <person name="Inagaki H."/>
            <person name="Ikema Y."/>
            <person name="Okamoto S."/>
            <person name="Okitani R."/>
            <person name="Kawakami T."/>
            <person name="Noguchi S."/>
            <person name="Itoh T."/>
            <person name="Shigeta K."/>
            <person name="Senba T."/>
            <person name="Matsumura K."/>
            <person name="Nakajima Y."/>
            <person name="Mizuno T."/>
            <person name="Morinaga M."/>
            <person name="Sasaki M."/>
            <person name="Togashi T."/>
            <person name="Oyama M."/>
            <person name="Hata H."/>
            <person name="Watanabe M."/>
            <person name="Komatsu T."/>
            <person name="Mizushima-Sugano J."/>
            <person name="Satoh T."/>
            <person name="Shirai Y."/>
            <person name="Takahashi Y."/>
            <person name="Nakagawa K."/>
            <person name="Okumura K."/>
            <person name="Nagase T."/>
            <person name="Nomura N."/>
            <person name="Kikuchi H."/>
            <person name="Masuho Y."/>
            <person name="Yamashita R."/>
            <person name="Nakai K."/>
            <person name="Yada T."/>
            <person name="Nakamura Y."/>
            <person name="Ohara O."/>
            <person name="Isogai T."/>
            <person name="Sugano S."/>
        </authorList>
    </citation>
    <scope>NUCLEOTIDE SEQUENCE [LARGE SCALE MRNA]</scope>
    <scope>VARIANT VAL-163</scope>
</reference>
<reference key="6">
    <citation type="journal article" date="2005" name="Nature">
        <title>Generation and annotation of the DNA sequences of human chromosomes 2 and 4.</title>
        <authorList>
            <person name="Hillier L.W."/>
            <person name="Graves T.A."/>
            <person name="Fulton R.S."/>
            <person name="Fulton L.A."/>
            <person name="Pepin K.H."/>
            <person name="Minx P."/>
            <person name="Wagner-McPherson C."/>
            <person name="Layman D."/>
            <person name="Wylie K."/>
            <person name="Sekhon M."/>
            <person name="Becker M.C."/>
            <person name="Fewell G.A."/>
            <person name="Delehaunty K.D."/>
            <person name="Miner T.L."/>
            <person name="Nash W.E."/>
            <person name="Kremitzki C."/>
            <person name="Oddy L."/>
            <person name="Du H."/>
            <person name="Sun H."/>
            <person name="Bradshaw-Cordum H."/>
            <person name="Ali J."/>
            <person name="Carter J."/>
            <person name="Cordes M."/>
            <person name="Harris A."/>
            <person name="Isak A."/>
            <person name="van Brunt A."/>
            <person name="Nguyen C."/>
            <person name="Du F."/>
            <person name="Courtney L."/>
            <person name="Kalicki J."/>
            <person name="Ozersky P."/>
            <person name="Abbott S."/>
            <person name="Armstrong J."/>
            <person name="Belter E.A."/>
            <person name="Caruso L."/>
            <person name="Cedroni M."/>
            <person name="Cotton M."/>
            <person name="Davidson T."/>
            <person name="Desai A."/>
            <person name="Elliott G."/>
            <person name="Erb T."/>
            <person name="Fronick C."/>
            <person name="Gaige T."/>
            <person name="Haakenson W."/>
            <person name="Haglund K."/>
            <person name="Holmes A."/>
            <person name="Harkins R."/>
            <person name="Kim K."/>
            <person name="Kruchowski S.S."/>
            <person name="Strong C.M."/>
            <person name="Grewal N."/>
            <person name="Goyea E."/>
            <person name="Hou S."/>
            <person name="Levy A."/>
            <person name="Martinka S."/>
            <person name="Mead K."/>
            <person name="McLellan M.D."/>
            <person name="Meyer R."/>
            <person name="Randall-Maher J."/>
            <person name="Tomlinson C."/>
            <person name="Dauphin-Kohlberg S."/>
            <person name="Kozlowicz-Reilly A."/>
            <person name="Shah N."/>
            <person name="Swearengen-Shahid S."/>
            <person name="Snider J."/>
            <person name="Strong J.T."/>
            <person name="Thompson J."/>
            <person name="Yoakum M."/>
            <person name="Leonard S."/>
            <person name="Pearman C."/>
            <person name="Trani L."/>
            <person name="Radionenko M."/>
            <person name="Waligorski J.E."/>
            <person name="Wang C."/>
            <person name="Rock S.M."/>
            <person name="Tin-Wollam A.-M."/>
            <person name="Maupin R."/>
            <person name="Latreille P."/>
            <person name="Wendl M.C."/>
            <person name="Yang S.-P."/>
            <person name="Pohl C."/>
            <person name="Wallis J.W."/>
            <person name="Spieth J."/>
            <person name="Bieri T.A."/>
            <person name="Berkowicz N."/>
            <person name="Nelson J.O."/>
            <person name="Osborne J."/>
            <person name="Ding L."/>
            <person name="Meyer R."/>
            <person name="Sabo A."/>
            <person name="Shotland Y."/>
            <person name="Sinha P."/>
            <person name="Wohldmann P.E."/>
            <person name="Cook L.L."/>
            <person name="Hickenbotham M.T."/>
            <person name="Eldred J."/>
            <person name="Williams D."/>
            <person name="Jones T.A."/>
            <person name="She X."/>
            <person name="Ciccarelli F.D."/>
            <person name="Izaurralde E."/>
            <person name="Taylor J."/>
            <person name="Schmutz J."/>
            <person name="Myers R.M."/>
            <person name="Cox D.R."/>
            <person name="Huang X."/>
            <person name="McPherson J.D."/>
            <person name="Mardis E.R."/>
            <person name="Clifton S.W."/>
            <person name="Warren W.C."/>
            <person name="Chinwalla A.T."/>
            <person name="Eddy S.R."/>
            <person name="Marra M.A."/>
            <person name="Ovcharenko I."/>
            <person name="Furey T.S."/>
            <person name="Miller W."/>
            <person name="Eichler E.E."/>
            <person name="Bork P."/>
            <person name="Suyama M."/>
            <person name="Torrents D."/>
            <person name="Waterston R.H."/>
            <person name="Wilson R.K."/>
        </authorList>
    </citation>
    <scope>NUCLEOTIDE SEQUENCE [LARGE SCALE GENOMIC DNA]</scope>
</reference>
<reference key="7">
    <citation type="submission" date="2005-09" db="EMBL/GenBank/DDBJ databases">
        <authorList>
            <person name="Mural R.J."/>
            <person name="Istrail S."/>
            <person name="Sutton G.G."/>
            <person name="Florea L."/>
            <person name="Halpern A.L."/>
            <person name="Mobarry C.M."/>
            <person name="Lippert R."/>
            <person name="Walenz B."/>
            <person name="Shatkay H."/>
            <person name="Dew I."/>
            <person name="Miller J.R."/>
            <person name="Flanigan M.J."/>
            <person name="Edwards N.J."/>
            <person name="Bolanos R."/>
            <person name="Fasulo D."/>
            <person name="Halldorsson B.V."/>
            <person name="Hannenhalli S."/>
            <person name="Turner R."/>
            <person name="Yooseph S."/>
            <person name="Lu F."/>
            <person name="Nusskern D.R."/>
            <person name="Shue B.C."/>
            <person name="Zheng X.H."/>
            <person name="Zhong F."/>
            <person name="Delcher A.L."/>
            <person name="Huson D.H."/>
            <person name="Kravitz S.A."/>
            <person name="Mouchard L."/>
            <person name="Reinert K."/>
            <person name="Remington K.A."/>
            <person name="Clark A.G."/>
            <person name="Waterman M.S."/>
            <person name="Eichler E.E."/>
            <person name="Adams M.D."/>
            <person name="Hunkapiller M.W."/>
            <person name="Myers E.W."/>
            <person name="Venter J.C."/>
        </authorList>
    </citation>
    <scope>NUCLEOTIDE SEQUENCE [LARGE SCALE GENOMIC DNA]</scope>
    <scope>VARIANT VAL-163</scope>
</reference>
<reference key="8">
    <citation type="journal article" date="2004" name="Genome Res.">
        <title>The status, quality, and expansion of the NIH full-length cDNA project: the Mammalian Gene Collection (MGC).</title>
        <authorList>
            <consortium name="The MGC Project Team"/>
        </authorList>
    </citation>
    <scope>NUCLEOTIDE SEQUENCE [LARGE SCALE MRNA]</scope>
    <scope>VARIANT VAL-163</scope>
    <source>
        <tissue>Brain</tissue>
    </source>
</reference>
<reference key="9">
    <citation type="journal article" date="1992" name="EMBO J.">
        <title>Cyclin A is required at two points in the human cell cycle.</title>
        <authorList>
            <person name="Pagano M."/>
            <person name="Pepperkok R."/>
            <person name="Verde F."/>
            <person name="Ansorge W."/>
            <person name="Draetta G."/>
        </authorList>
    </citation>
    <scope>FUNCTION</scope>
    <scope>INTERACTION WITH CDK1 AND CDK2</scope>
    <scope>SUBCELLULAR LOCATION</scope>
    <scope>DEVELOPMENTAL STAGE</scope>
</reference>
<reference key="10">
    <citation type="journal article" date="2007" name="J. Cell Biol.">
        <title>SCAPER, a novel cyclin A-interacting protein that regulates cell cycle progression.</title>
        <authorList>
            <person name="Tsang W.Y."/>
            <person name="Wang L."/>
            <person name="Chen Z."/>
            <person name="Sanchez I."/>
            <person name="Dynlacht B.D."/>
        </authorList>
    </citation>
    <scope>INTERACTION WITH SCAPER</scope>
    <scope>SUBCELLULAR LOCATION</scope>
</reference>
<reference key="11">
    <citation type="journal article" date="2009" name="Mol. Cell. Proteomics">
        <title>Large-scale proteomics analysis of the human kinome.</title>
        <authorList>
            <person name="Oppermann F.S."/>
            <person name="Gnad F."/>
            <person name="Olsen J.V."/>
            <person name="Hornberger R."/>
            <person name="Greff Z."/>
            <person name="Keri G."/>
            <person name="Mann M."/>
            <person name="Daub H."/>
        </authorList>
    </citation>
    <scope>ACETYLATION [LARGE SCALE ANALYSIS] AT MET-1</scope>
    <scope>PHOSPHORYLATION [LARGE SCALE ANALYSIS] AT SER-5 AND SER-55</scope>
    <scope>IDENTIFICATION BY MASS SPECTROMETRY [LARGE SCALE ANALYSIS]</scope>
</reference>
<reference key="12">
    <citation type="journal article" date="2011" name="BMC Syst. Biol.">
        <title>Initial characterization of the human central proteome.</title>
        <authorList>
            <person name="Burkard T.R."/>
            <person name="Planyavsky M."/>
            <person name="Kaupe I."/>
            <person name="Breitwieser F.P."/>
            <person name="Buerckstuemmer T."/>
            <person name="Bennett K.L."/>
            <person name="Superti-Furga G."/>
            <person name="Colinge J."/>
        </authorList>
    </citation>
    <scope>IDENTIFICATION BY MASS SPECTROMETRY [LARGE SCALE ANALYSIS]</scope>
</reference>
<reference key="13">
    <citation type="journal article" date="2011" name="J. Biol. Chem.">
        <title>Inhibitor of cyclin-dependent kinase (CDK) interacting with cyclin A1 (INCA1) regulates proliferation and is repressed by oncogenic signaling.</title>
        <authorList>
            <person name="Baeumer N."/>
            <person name="Tickenbrock L."/>
            <person name="Tschanter P."/>
            <person name="Lohmeyer L."/>
            <person name="Diederichs S."/>
            <person name="Baeumer S."/>
            <person name="Skryabin B.V."/>
            <person name="Zhang F."/>
            <person name="Agrawal-Singh S."/>
            <person name="Koehler G."/>
            <person name="Berdel W.E."/>
            <person name="Serve H."/>
            <person name="Koschmieder S."/>
            <person name="Mueller-Tidow C."/>
        </authorList>
    </citation>
    <scope>INTERACTION WITH INCA1</scope>
</reference>
<reference key="14">
    <citation type="journal article" date="2011" name="Mol. Cell">
        <title>Deubiquitinase USP37 is activated by CDK2 to antagonize APC(CDH1) and promote S phase entry.</title>
        <authorList>
            <person name="Huang X."/>
            <person name="Summers M.K."/>
            <person name="Pham V."/>
            <person name="Lill J.R."/>
            <person name="Liu J."/>
            <person name="Lee G."/>
            <person name="Kirkpatrick D.S."/>
            <person name="Jackson P.K."/>
            <person name="Fang G."/>
            <person name="Dixit V.M."/>
        </authorList>
    </citation>
    <scope>UBIQUITINATION</scope>
    <scope>DEUBIQUITINATION BY USP37</scope>
</reference>
<reference key="15">
    <citation type="journal article" date="2012" name="Proc. Natl. Acad. Sci. U.S.A.">
        <title>N-terminal acetylome analyses and functional insights of the N-terminal acetyltransferase NatB.</title>
        <authorList>
            <person name="Van Damme P."/>
            <person name="Lasa M."/>
            <person name="Polevoda B."/>
            <person name="Gazquez C."/>
            <person name="Elosegui-Artola A."/>
            <person name="Kim D.S."/>
            <person name="De Juan-Pardo E."/>
            <person name="Demeyer K."/>
            <person name="Hole K."/>
            <person name="Larrea E."/>
            <person name="Timmerman E."/>
            <person name="Prieto J."/>
            <person name="Arnesen T."/>
            <person name="Sherman F."/>
            <person name="Gevaert K."/>
            <person name="Aldabe R."/>
        </authorList>
    </citation>
    <scope>IDENTIFICATION BY MASS SPECTROMETRY [LARGE SCALE ANALYSIS]</scope>
</reference>
<reference key="16">
    <citation type="journal article" date="2013" name="J. Proteome Res.">
        <title>Toward a comprehensive characterization of a human cancer cell phosphoproteome.</title>
        <authorList>
            <person name="Zhou H."/>
            <person name="Di Palma S."/>
            <person name="Preisinger C."/>
            <person name="Peng M."/>
            <person name="Polat A.N."/>
            <person name="Heck A.J."/>
            <person name="Mohammed S."/>
        </authorList>
    </citation>
    <scope>PHOSPHORYLATION [LARGE SCALE ANALYSIS] AT SER-5</scope>
    <scope>IDENTIFICATION BY MASS SPECTROMETRY [LARGE SCALE ANALYSIS]</scope>
    <source>
        <tissue>Erythroleukemia</tissue>
    </source>
</reference>
<reference key="17">
    <citation type="journal article" date="2013" name="Proc. Natl. Acad. Sci. U.S.A.">
        <title>Human cytomegalovirus tegument protein pp150 acts as a cyclin A2-CDK-dependent sensor of the host cell cycle and differentiation state.</title>
        <authorList>
            <person name="Bogdanow B."/>
            <person name="Weisbach H."/>
            <person name="von Einem J."/>
            <person name="Straschewski S."/>
            <person name="Voigt S."/>
            <person name="Winkler M."/>
            <person name="Hagemeier C."/>
            <person name="Wiebusch L."/>
        </authorList>
    </citation>
    <scope>INTERACTION WITH HUMAN CYTOMEGALOVIRUS UL32 (MICROBIAL INFECTION)</scope>
</reference>
<reference key="18">
    <citation type="journal article" date="2019" name="J. Biol. Chem.">
        <title>The tumor suppressor FBXO31 preserves genomic integrity by regulating DNA replication and segregation through precise control of cyclin A levels.</title>
        <authorList>
            <person name="Dutta P."/>
            <person name="Islam S."/>
            <person name="Choppara S."/>
            <person name="Sengupta P."/>
            <person name="Kumar A."/>
            <person name="Kumar A."/>
            <person name="Wani M.R."/>
            <person name="Chatterjee S."/>
            <person name="Santra M.K."/>
        </authorList>
    </citation>
    <scope>UBIQUITINATION</scope>
</reference>
<reference key="19">
    <citation type="journal article" date="1995" name="Nature">
        <title>Mechanism of CDK activation revealed by the structure of a cyclinA-CDK2 complex.</title>
        <authorList>
            <person name="Jeffrey P.D."/>
            <person name="Russo A.A."/>
            <person name="Polyak K."/>
            <person name="Gibbs E."/>
            <person name="Hurwitz J."/>
            <person name="Massague J."/>
            <person name="Pavletich N.P."/>
        </authorList>
    </citation>
    <scope>X-RAY CRYSTALLOGRAPHY (2.3 ANGSTROMS) OF 173-432 IN COMPLEX WITH CDK2</scope>
</reference>
<reference key="20">
    <citation type="journal article" date="1996" name="Nature">
        <title>Crystal structure of the p27Kip1 cyclin-dependent-kinase inhibitor bound to the cyclin A-Cdk2 complex.</title>
        <authorList>
            <person name="Russo A.A."/>
            <person name="Jeffrey P.D."/>
            <person name="Patten A.K."/>
            <person name="Massague J."/>
            <person name="Pavletich N.P."/>
        </authorList>
    </citation>
    <scope>X-RAY CRYSTALLOGRAPHY (2.3 ANGSTROMS) OF 173-432 IN COMPLEX WITH CDK2 AND CDKN1B</scope>
</reference>
<reference key="21">
    <citation type="journal article" date="1996" name="Nat. Struct. Biol.">
        <title>Structural basis of cyclin-dependent kinase activation by phosphorylation.</title>
        <authorList>
            <person name="Russo A.A."/>
            <person name="Jeffrey P.D."/>
            <person name="Pavletich N.P."/>
        </authorList>
    </citation>
    <scope>X-RAY CRYSTALLOGRAPHY (2.6 ANGSTROMS) OF 173-432 IN COMPLEX WITH CDK2</scope>
</reference>
<reference key="22">
    <citation type="journal article" date="2008" name="Mol. Cell">
        <title>Kinase-selective enrichment enables quantitative phosphoproteomics of the kinome across the cell cycle.</title>
        <authorList>
            <person name="Daub H."/>
            <person name="Olsen J.V."/>
            <person name="Bairlein M."/>
            <person name="Gnad F."/>
            <person name="Oppermann F.S."/>
            <person name="Korner R."/>
            <person name="Greff Z."/>
            <person name="Keri G."/>
            <person name="Stemmann O."/>
            <person name="Mann M."/>
        </authorList>
    </citation>
    <scope>VARIANT [LARGE SCALE ANALYSIS] VAL-163</scope>
    <scope>IDENTIFICATION BY MASS SPECTROMETRY [LARGE SCALE ANALYSIS]</scope>
    <source>
        <tissue>Cervix carcinoma</tissue>
    </source>
</reference>
<dbReference type="EMBL" id="X51688">
    <property type="protein sequence ID" value="CAA35986.1"/>
    <property type="molecule type" value="mRNA"/>
</dbReference>
<dbReference type="EMBL" id="X68303">
    <property type="protein sequence ID" value="CAA48375.1"/>
    <property type="molecule type" value="Genomic_DNA"/>
</dbReference>
<dbReference type="EMBL" id="CR407692">
    <property type="protein sequence ID" value="CAG28620.1"/>
    <property type="molecule type" value="mRNA"/>
</dbReference>
<dbReference type="EMBL" id="AF518006">
    <property type="protein sequence ID" value="AAM54042.1"/>
    <property type="molecule type" value="Genomic_DNA"/>
</dbReference>
<dbReference type="EMBL" id="AK291931">
    <property type="protein sequence ID" value="BAF84620.1"/>
    <property type="molecule type" value="mRNA"/>
</dbReference>
<dbReference type="EMBL" id="AC079341">
    <property type="protein sequence ID" value="AAY40969.1"/>
    <property type="molecule type" value="Genomic_DNA"/>
</dbReference>
<dbReference type="EMBL" id="CH471056">
    <property type="protein sequence ID" value="EAX05246.1"/>
    <property type="molecule type" value="Genomic_DNA"/>
</dbReference>
<dbReference type="EMBL" id="BC104783">
    <property type="protein sequence ID" value="AAI04784.1"/>
    <property type="molecule type" value="mRNA"/>
</dbReference>
<dbReference type="EMBL" id="BC104787">
    <property type="protein sequence ID" value="AAI04788.1"/>
    <property type="molecule type" value="mRNA"/>
</dbReference>
<dbReference type="CCDS" id="CCDS3723.1"/>
<dbReference type="PIR" id="S08277">
    <property type="entry name" value="S08277"/>
</dbReference>
<dbReference type="RefSeq" id="NP_001228.2">
    <property type="nucleotide sequence ID" value="NM_001237.5"/>
</dbReference>
<dbReference type="PDB" id="1E9H">
    <property type="method" value="X-ray"/>
    <property type="resolution" value="2.50 A"/>
    <property type="chains" value="B/D=175-432"/>
</dbReference>
<dbReference type="PDB" id="1FIN">
    <property type="method" value="X-ray"/>
    <property type="resolution" value="2.30 A"/>
    <property type="chains" value="B/D=173-432"/>
</dbReference>
<dbReference type="PDB" id="1FVV">
    <property type="method" value="X-ray"/>
    <property type="resolution" value="2.80 A"/>
    <property type="chains" value="B/D=173-432"/>
</dbReference>
<dbReference type="PDB" id="1GY3">
    <property type="method" value="X-ray"/>
    <property type="resolution" value="2.70 A"/>
    <property type="chains" value="B/D=175-432"/>
</dbReference>
<dbReference type="PDB" id="1H1P">
    <property type="method" value="X-ray"/>
    <property type="resolution" value="2.10 A"/>
    <property type="chains" value="B/D=175-432"/>
</dbReference>
<dbReference type="PDB" id="1H1Q">
    <property type="method" value="X-ray"/>
    <property type="resolution" value="2.50 A"/>
    <property type="chains" value="B/D=175-432"/>
</dbReference>
<dbReference type="PDB" id="1H1R">
    <property type="method" value="X-ray"/>
    <property type="resolution" value="2.00 A"/>
    <property type="chains" value="B/D=175-432"/>
</dbReference>
<dbReference type="PDB" id="1H1S">
    <property type="method" value="X-ray"/>
    <property type="resolution" value="2.00 A"/>
    <property type="chains" value="B/D=175-432"/>
</dbReference>
<dbReference type="PDB" id="1H24">
    <property type="method" value="X-ray"/>
    <property type="resolution" value="2.50 A"/>
    <property type="chains" value="B/D=174-432"/>
</dbReference>
<dbReference type="PDB" id="1H25">
    <property type="method" value="X-ray"/>
    <property type="resolution" value="2.50 A"/>
    <property type="chains" value="B/D=174-432"/>
</dbReference>
<dbReference type="PDB" id="1H26">
    <property type="method" value="X-ray"/>
    <property type="resolution" value="2.24 A"/>
    <property type="chains" value="B/D=174-432"/>
</dbReference>
<dbReference type="PDB" id="1H27">
    <property type="method" value="X-ray"/>
    <property type="resolution" value="2.20 A"/>
    <property type="chains" value="B/D=174-432"/>
</dbReference>
<dbReference type="PDB" id="1H28">
    <property type="method" value="X-ray"/>
    <property type="resolution" value="2.80 A"/>
    <property type="chains" value="B/D=174-432"/>
</dbReference>
<dbReference type="PDB" id="1JST">
    <property type="method" value="X-ray"/>
    <property type="resolution" value="2.60 A"/>
    <property type="chains" value="B/D=175-432"/>
</dbReference>
<dbReference type="PDB" id="1JSU">
    <property type="method" value="X-ray"/>
    <property type="resolution" value="2.30 A"/>
    <property type="chains" value="B=173-432"/>
</dbReference>
<dbReference type="PDB" id="1OGU">
    <property type="method" value="X-ray"/>
    <property type="resolution" value="2.60 A"/>
    <property type="chains" value="B/D=174-432"/>
</dbReference>
<dbReference type="PDB" id="1OI9">
    <property type="method" value="X-ray"/>
    <property type="resolution" value="2.10 A"/>
    <property type="chains" value="B/D=174-432"/>
</dbReference>
<dbReference type="PDB" id="1OIU">
    <property type="method" value="X-ray"/>
    <property type="resolution" value="2.00 A"/>
    <property type="chains" value="B/D=174-432"/>
</dbReference>
<dbReference type="PDB" id="1OIY">
    <property type="method" value="X-ray"/>
    <property type="resolution" value="2.40 A"/>
    <property type="chains" value="B/D=174-432"/>
</dbReference>
<dbReference type="PDB" id="1OKV">
    <property type="method" value="X-ray"/>
    <property type="resolution" value="2.40 A"/>
    <property type="chains" value="B/D=173-432"/>
</dbReference>
<dbReference type="PDB" id="1OKW">
    <property type="method" value="X-ray"/>
    <property type="resolution" value="2.50 A"/>
    <property type="chains" value="B/D=173-432"/>
</dbReference>
<dbReference type="PDB" id="1OL1">
    <property type="method" value="X-ray"/>
    <property type="resolution" value="2.90 A"/>
    <property type="chains" value="B/D=173-432"/>
</dbReference>
<dbReference type="PDB" id="1OL2">
    <property type="method" value="X-ray"/>
    <property type="resolution" value="2.60 A"/>
    <property type="chains" value="B/D=173-432"/>
</dbReference>
<dbReference type="PDB" id="1P5E">
    <property type="method" value="X-ray"/>
    <property type="resolution" value="2.22 A"/>
    <property type="chains" value="B/D=175-432"/>
</dbReference>
<dbReference type="PDB" id="1PKD">
    <property type="method" value="X-ray"/>
    <property type="resolution" value="2.30 A"/>
    <property type="chains" value="B/D=175-432"/>
</dbReference>
<dbReference type="PDB" id="1QMZ">
    <property type="method" value="X-ray"/>
    <property type="resolution" value="2.20 A"/>
    <property type="chains" value="B/D=174-432"/>
</dbReference>
<dbReference type="PDB" id="1URC">
    <property type="method" value="X-ray"/>
    <property type="resolution" value="2.60 A"/>
    <property type="chains" value="B/D=173-432"/>
</dbReference>
<dbReference type="PDB" id="1VYW">
    <property type="method" value="X-ray"/>
    <property type="resolution" value="2.30 A"/>
    <property type="chains" value="B/D=174-432"/>
</dbReference>
<dbReference type="PDB" id="2BKZ">
    <property type="method" value="X-ray"/>
    <property type="resolution" value="2.60 A"/>
    <property type="chains" value="B/D=174-432"/>
</dbReference>
<dbReference type="PDB" id="2BPM">
    <property type="method" value="X-ray"/>
    <property type="resolution" value="2.40 A"/>
    <property type="chains" value="B/D=174-432"/>
</dbReference>
<dbReference type="PDB" id="2C4G">
    <property type="method" value="X-ray"/>
    <property type="resolution" value="2.70 A"/>
    <property type="chains" value="B/D=173-432"/>
</dbReference>
<dbReference type="PDB" id="2C5N">
    <property type="method" value="X-ray"/>
    <property type="resolution" value="2.10 A"/>
    <property type="chains" value="B/D=174-432"/>
</dbReference>
<dbReference type="PDB" id="2C5O">
    <property type="method" value="X-ray"/>
    <property type="resolution" value="2.10 A"/>
    <property type="chains" value="B/D=173-432"/>
</dbReference>
<dbReference type="PDB" id="2C5V">
    <property type="method" value="X-ray"/>
    <property type="resolution" value="2.90 A"/>
    <property type="chains" value="B/D=174-432"/>
</dbReference>
<dbReference type="PDB" id="2C5X">
    <property type="method" value="X-ray"/>
    <property type="resolution" value="2.90 A"/>
    <property type="chains" value="B/D=174-432"/>
</dbReference>
<dbReference type="PDB" id="2C6T">
    <property type="method" value="X-ray"/>
    <property type="resolution" value="2.61 A"/>
    <property type="chains" value="B/D=175-432"/>
</dbReference>
<dbReference type="PDB" id="2CCH">
    <property type="method" value="X-ray"/>
    <property type="resolution" value="1.70 A"/>
    <property type="chains" value="B/D=173-432"/>
</dbReference>
<dbReference type="PDB" id="2CCI">
    <property type="method" value="X-ray"/>
    <property type="resolution" value="2.70 A"/>
    <property type="chains" value="B/D=175-432"/>
</dbReference>
<dbReference type="PDB" id="2CJM">
    <property type="method" value="X-ray"/>
    <property type="resolution" value="2.30 A"/>
    <property type="chains" value="B/D=175-432"/>
</dbReference>
<dbReference type="PDB" id="2I40">
    <property type="method" value="X-ray"/>
    <property type="resolution" value="2.80 A"/>
    <property type="chains" value="B/D=173-432"/>
</dbReference>
<dbReference type="PDB" id="2IW6">
    <property type="method" value="X-ray"/>
    <property type="resolution" value="2.30 A"/>
    <property type="chains" value="B/D=174-432"/>
</dbReference>
<dbReference type="PDB" id="2IW8">
    <property type="method" value="X-ray"/>
    <property type="resolution" value="2.30 A"/>
    <property type="chains" value="B/D=174-432"/>
</dbReference>
<dbReference type="PDB" id="2IW9">
    <property type="method" value="X-ray"/>
    <property type="resolution" value="2.00 A"/>
    <property type="chains" value="B/D=174-432"/>
</dbReference>
<dbReference type="PDB" id="2UUE">
    <property type="method" value="X-ray"/>
    <property type="resolution" value="2.06 A"/>
    <property type="chains" value="B/D=174-432"/>
</dbReference>
<dbReference type="PDB" id="2UZB">
    <property type="method" value="X-ray"/>
    <property type="resolution" value="2.70 A"/>
    <property type="chains" value="B/D=175-432"/>
</dbReference>
<dbReference type="PDB" id="2UZD">
    <property type="method" value="X-ray"/>
    <property type="resolution" value="2.72 A"/>
    <property type="chains" value="B/D=175-432"/>
</dbReference>
<dbReference type="PDB" id="2UZE">
    <property type="method" value="X-ray"/>
    <property type="resolution" value="2.40 A"/>
    <property type="chains" value="B/D=175-432"/>
</dbReference>
<dbReference type="PDB" id="2UZL">
    <property type="method" value="X-ray"/>
    <property type="resolution" value="2.40 A"/>
    <property type="chains" value="B/D=175-432"/>
</dbReference>
<dbReference type="PDB" id="2V22">
    <property type="method" value="X-ray"/>
    <property type="resolution" value="2.60 A"/>
    <property type="chains" value="B/D=174-432"/>
</dbReference>
<dbReference type="PDB" id="2WEV">
    <property type="method" value="X-ray"/>
    <property type="resolution" value="2.30 A"/>
    <property type="chains" value="B/D=173-432"/>
</dbReference>
<dbReference type="PDB" id="2WFY">
    <property type="method" value="X-ray"/>
    <property type="resolution" value="2.53 A"/>
    <property type="chains" value="B/D=173-432"/>
</dbReference>
<dbReference type="PDB" id="2WHB">
    <property type="method" value="X-ray"/>
    <property type="resolution" value="2.90 A"/>
    <property type="chains" value="B/D=173-432"/>
</dbReference>
<dbReference type="PDB" id="2WIH">
    <property type="method" value="X-ray"/>
    <property type="resolution" value="2.50 A"/>
    <property type="chains" value="B/D=173-432"/>
</dbReference>
<dbReference type="PDB" id="2WIP">
    <property type="method" value="X-ray"/>
    <property type="resolution" value="2.80 A"/>
    <property type="chains" value="B/D=173-432"/>
</dbReference>
<dbReference type="PDB" id="2WMA">
    <property type="method" value="X-ray"/>
    <property type="resolution" value="2.80 A"/>
    <property type="chains" value="B/D=174-432"/>
</dbReference>
<dbReference type="PDB" id="2WMB">
    <property type="method" value="X-ray"/>
    <property type="resolution" value="2.60 A"/>
    <property type="chains" value="B/D=174-432"/>
</dbReference>
<dbReference type="PDB" id="2WPA">
    <property type="method" value="X-ray"/>
    <property type="resolution" value="2.51 A"/>
    <property type="chains" value="B/D=173-432"/>
</dbReference>
<dbReference type="PDB" id="2WXV">
    <property type="method" value="X-ray"/>
    <property type="resolution" value="2.60 A"/>
    <property type="chains" value="B/D=173-432"/>
</dbReference>
<dbReference type="PDB" id="2X1N">
    <property type="method" value="X-ray"/>
    <property type="resolution" value="2.75 A"/>
    <property type="chains" value="B/D=172-432"/>
</dbReference>
<dbReference type="PDB" id="3EID">
    <property type="method" value="X-ray"/>
    <property type="resolution" value="3.15 A"/>
    <property type="chains" value="B/D=173-432"/>
</dbReference>
<dbReference type="PDB" id="3EJ1">
    <property type="method" value="X-ray"/>
    <property type="resolution" value="3.22 A"/>
    <property type="chains" value="B/D=173-432"/>
</dbReference>
<dbReference type="PDB" id="3EOC">
    <property type="method" value="X-ray"/>
    <property type="resolution" value="3.20 A"/>
    <property type="chains" value="B/D=173-432"/>
</dbReference>
<dbReference type="PDB" id="3F5X">
    <property type="method" value="X-ray"/>
    <property type="resolution" value="2.40 A"/>
    <property type="chains" value="B/D=177-432"/>
</dbReference>
<dbReference type="PDB" id="4BCK">
    <property type="method" value="X-ray"/>
    <property type="resolution" value="2.05 A"/>
    <property type="chains" value="B/D=171-432"/>
</dbReference>
<dbReference type="PDB" id="4BCM">
    <property type="method" value="X-ray"/>
    <property type="resolution" value="2.45 A"/>
    <property type="chains" value="B/D=171-432"/>
</dbReference>
<dbReference type="PDB" id="4BCN">
    <property type="method" value="X-ray"/>
    <property type="resolution" value="2.10 A"/>
    <property type="chains" value="B=171-432, D=171-431"/>
</dbReference>
<dbReference type="PDB" id="4BCP">
    <property type="method" value="X-ray"/>
    <property type="resolution" value="2.26 A"/>
    <property type="chains" value="B/D=171-432"/>
</dbReference>
<dbReference type="PDB" id="4CFM">
    <property type="method" value="X-ray"/>
    <property type="resolution" value="2.85 A"/>
    <property type="chains" value="B/D=175-432"/>
</dbReference>
<dbReference type="PDB" id="4CFN">
    <property type="method" value="X-ray"/>
    <property type="resolution" value="2.20 A"/>
    <property type="chains" value="B/D=175-432"/>
</dbReference>
<dbReference type="PDB" id="4CFU">
    <property type="method" value="X-ray"/>
    <property type="resolution" value="2.20 A"/>
    <property type="chains" value="B=172-432, D=173-432"/>
</dbReference>
<dbReference type="PDB" id="4CFV">
    <property type="method" value="X-ray"/>
    <property type="resolution" value="2.00 A"/>
    <property type="chains" value="B/D=172-432"/>
</dbReference>
<dbReference type="PDB" id="4CFW">
    <property type="method" value="X-ray"/>
    <property type="resolution" value="2.45 A"/>
    <property type="chains" value="B/D=175-432"/>
</dbReference>
<dbReference type="PDB" id="4CFX">
    <property type="method" value="X-ray"/>
    <property type="resolution" value="3.50 A"/>
    <property type="chains" value="B/D=173-432"/>
</dbReference>
<dbReference type="PDB" id="4EOI">
    <property type="method" value="X-ray"/>
    <property type="resolution" value="2.00 A"/>
    <property type="chains" value="B/D=175-432"/>
</dbReference>
<dbReference type="PDB" id="4EOJ">
    <property type="method" value="X-ray"/>
    <property type="resolution" value="1.65 A"/>
    <property type="chains" value="B/D=175-432"/>
</dbReference>
<dbReference type="PDB" id="4EOK">
    <property type="method" value="X-ray"/>
    <property type="resolution" value="2.57 A"/>
    <property type="chains" value="B/D=175-432"/>
</dbReference>
<dbReference type="PDB" id="4EOL">
    <property type="method" value="X-ray"/>
    <property type="resolution" value="2.40 A"/>
    <property type="chains" value="B/D=175-432"/>
</dbReference>
<dbReference type="PDB" id="4EOM">
    <property type="method" value="X-ray"/>
    <property type="resolution" value="2.10 A"/>
    <property type="chains" value="B/D=175-432"/>
</dbReference>
<dbReference type="PDB" id="4EON">
    <property type="method" value="X-ray"/>
    <property type="resolution" value="2.40 A"/>
    <property type="chains" value="B/D=175-432"/>
</dbReference>
<dbReference type="PDB" id="4EOO">
    <property type="method" value="X-ray"/>
    <property type="resolution" value="2.10 A"/>
    <property type="chains" value="B/D=175-432"/>
</dbReference>
<dbReference type="PDB" id="4EOP">
    <property type="method" value="X-ray"/>
    <property type="resolution" value="1.99 A"/>
    <property type="chains" value="B/D=175-432"/>
</dbReference>
<dbReference type="PDB" id="4EOQ">
    <property type="method" value="X-ray"/>
    <property type="resolution" value="2.15 A"/>
    <property type="chains" value="B/D=175-432"/>
</dbReference>
<dbReference type="PDB" id="4EOR">
    <property type="method" value="X-ray"/>
    <property type="resolution" value="2.20 A"/>
    <property type="chains" value="B/D=175-432"/>
</dbReference>
<dbReference type="PDB" id="4EOS">
    <property type="method" value="X-ray"/>
    <property type="resolution" value="2.57 A"/>
    <property type="chains" value="B/D=175-432"/>
</dbReference>
<dbReference type="PDB" id="4FX3">
    <property type="method" value="X-ray"/>
    <property type="resolution" value="2.75 A"/>
    <property type="chains" value="B/D=175-432"/>
</dbReference>
<dbReference type="PDB" id="5CYI">
    <property type="method" value="X-ray"/>
    <property type="resolution" value="2.00 A"/>
    <property type="chains" value="B/D=174-432"/>
</dbReference>
<dbReference type="PDB" id="5IF1">
    <property type="method" value="X-ray"/>
    <property type="resolution" value="2.61 A"/>
    <property type="chains" value="B/D=174-432"/>
</dbReference>
<dbReference type="PDB" id="5LMK">
    <property type="method" value="X-ray"/>
    <property type="resolution" value="2.40 A"/>
    <property type="chains" value="B/D=175-432"/>
</dbReference>
<dbReference type="PDB" id="5NEV">
    <property type="method" value="X-ray"/>
    <property type="resolution" value="2.97 A"/>
    <property type="chains" value="B/D=174-432"/>
</dbReference>
<dbReference type="PDB" id="6ATH">
    <property type="method" value="X-ray"/>
    <property type="resolution" value="1.82 A"/>
    <property type="chains" value="B=173-432"/>
</dbReference>
<dbReference type="PDB" id="6GVA">
    <property type="method" value="X-ray"/>
    <property type="resolution" value="2.15 A"/>
    <property type="chains" value="B=175-432"/>
</dbReference>
<dbReference type="PDB" id="6P3W">
    <property type="method" value="X-ray"/>
    <property type="resolution" value="2.54 A"/>
    <property type="chains" value="B/D=176-432"/>
</dbReference>
<dbReference type="PDB" id="6Q6G">
    <property type="method" value="EM"/>
    <property type="resolution" value="3.20 A"/>
    <property type="chains" value="S=1-432"/>
</dbReference>
<dbReference type="PDB" id="6Q6H">
    <property type="method" value="EM"/>
    <property type="resolution" value="3.20 A"/>
    <property type="chains" value="S=1-432"/>
</dbReference>
<dbReference type="PDB" id="6RIJ">
    <property type="method" value="X-ray"/>
    <property type="resolution" value="2.20 A"/>
    <property type="chains" value="B/D=175-432"/>
</dbReference>
<dbReference type="PDB" id="6SG4">
    <property type="method" value="X-ray"/>
    <property type="resolution" value="2.43 A"/>
    <property type="chains" value="B/D=174-432"/>
</dbReference>
<dbReference type="PDB" id="7ACK">
    <property type="method" value="X-ray"/>
    <property type="resolution" value="1.80 A"/>
    <property type="chains" value="B/D=175-432"/>
</dbReference>
<dbReference type="PDB" id="7B5L">
    <property type="method" value="EM"/>
    <property type="resolution" value="3.80 A"/>
    <property type="chains" value="Y=1-432"/>
</dbReference>
<dbReference type="PDB" id="7B5R">
    <property type="method" value="EM"/>
    <property type="resolution" value="3.80 A"/>
    <property type="chains" value="Y=1-432"/>
</dbReference>
<dbReference type="PDB" id="7B7S">
    <property type="method" value="X-ray"/>
    <property type="resolution" value="2.54 A"/>
    <property type="chains" value="B/D=175-432"/>
</dbReference>
<dbReference type="PDB" id="7LUO">
    <property type="method" value="X-ray"/>
    <property type="resolution" value="3.17 A"/>
    <property type="chains" value="A/C=174-432"/>
</dbReference>
<dbReference type="PDB" id="7MKX">
    <property type="method" value="X-ray"/>
    <property type="resolution" value="3.08 A"/>
    <property type="chains" value="B/D=171-432"/>
</dbReference>
<dbReference type="PDB" id="7QHL">
    <property type="method" value="X-ray"/>
    <property type="resolution" value="1.70 A"/>
    <property type="chains" value="B/D=175-432"/>
</dbReference>
<dbReference type="PDB" id="8B54">
    <property type="method" value="X-ray"/>
    <property type="resolution" value="2.60 A"/>
    <property type="chains" value="B/D=175-432"/>
</dbReference>
<dbReference type="PDB" id="8BYA">
    <property type="method" value="EM"/>
    <property type="resolution" value="3.38 A"/>
    <property type="chains" value="B=1-432"/>
</dbReference>
<dbReference type="PDB" id="8BZO">
    <property type="method" value="EM"/>
    <property type="resolution" value="3.50 A"/>
    <property type="chains" value="B=1-432"/>
</dbReference>
<dbReference type="PDBsum" id="1E9H"/>
<dbReference type="PDBsum" id="1FIN"/>
<dbReference type="PDBsum" id="1FVV"/>
<dbReference type="PDBsum" id="1GY3"/>
<dbReference type="PDBsum" id="1H1P"/>
<dbReference type="PDBsum" id="1H1Q"/>
<dbReference type="PDBsum" id="1H1R"/>
<dbReference type="PDBsum" id="1H1S"/>
<dbReference type="PDBsum" id="1H24"/>
<dbReference type="PDBsum" id="1H25"/>
<dbReference type="PDBsum" id="1H26"/>
<dbReference type="PDBsum" id="1H27"/>
<dbReference type="PDBsum" id="1H28"/>
<dbReference type="PDBsum" id="1JST"/>
<dbReference type="PDBsum" id="1JSU"/>
<dbReference type="PDBsum" id="1OGU"/>
<dbReference type="PDBsum" id="1OI9"/>
<dbReference type="PDBsum" id="1OIU"/>
<dbReference type="PDBsum" id="1OIY"/>
<dbReference type="PDBsum" id="1OKV"/>
<dbReference type="PDBsum" id="1OKW"/>
<dbReference type="PDBsum" id="1OL1"/>
<dbReference type="PDBsum" id="1OL2"/>
<dbReference type="PDBsum" id="1P5E"/>
<dbReference type="PDBsum" id="1PKD"/>
<dbReference type="PDBsum" id="1QMZ"/>
<dbReference type="PDBsum" id="1URC"/>
<dbReference type="PDBsum" id="1VYW"/>
<dbReference type="PDBsum" id="2BKZ"/>
<dbReference type="PDBsum" id="2BPM"/>
<dbReference type="PDBsum" id="2C4G"/>
<dbReference type="PDBsum" id="2C5N"/>
<dbReference type="PDBsum" id="2C5O"/>
<dbReference type="PDBsum" id="2C5V"/>
<dbReference type="PDBsum" id="2C5X"/>
<dbReference type="PDBsum" id="2C6T"/>
<dbReference type="PDBsum" id="2CCH"/>
<dbReference type="PDBsum" id="2CCI"/>
<dbReference type="PDBsum" id="2CJM"/>
<dbReference type="PDBsum" id="2I40"/>
<dbReference type="PDBsum" id="2IW6"/>
<dbReference type="PDBsum" id="2IW8"/>
<dbReference type="PDBsum" id="2IW9"/>
<dbReference type="PDBsum" id="2UUE"/>
<dbReference type="PDBsum" id="2UZB"/>
<dbReference type="PDBsum" id="2UZD"/>
<dbReference type="PDBsum" id="2UZE"/>
<dbReference type="PDBsum" id="2UZL"/>
<dbReference type="PDBsum" id="2V22"/>
<dbReference type="PDBsum" id="2WEV"/>
<dbReference type="PDBsum" id="2WFY"/>
<dbReference type="PDBsum" id="2WHB"/>
<dbReference type="PDBsum" id="2WIH"/>
<dbReference type="PDBsum" id="2WIP"/>
<dbReference type="PDBsum" id="2WMA"/>
<dbReference type="PDBsum" id="2WMB"/>
<dbReference type="PDBsum" id="2WPA"/>
<dbReference type="PDBsum" id="2WXV"/>
<dbReference type="PDBsum" id="2X1N"/>
<dbReference type="PDBsum" id="3EID"/>
<dbReference type="PDBsum" id="3EJ1"/>
<dbReference type="PDBsum" id="3EOC"/>
<dbReference type="PDBsum" id="3F5X"/>
<dbReference type="PDBsum" id="4BCK"/>
<dbReference type="PDBsum" id="4BCM"/>
<dbReference type="PDBsum" id="4BCN"/>
<dbReference type="PDBsum" id="4BCP"/>
<dbReference type="PDBsum" id="4CFM"/>
<dbReference type="PDBsum" id="4CFN"/>
<dbReference type="PDBsum" id="4CFU"/>
<dbReference type="PDBsum" id="4CFV"/>
<dbReference type="PDBsum" id="4CFW"/>
<dbReference type="PDBsum" id="4CFX"/>
<dbReference type="PDBsum" id="4EOI"/>
<dbReference type="PDBsum" id="4EOJ"/>
<dbReference type="PDBsum" id="4EOK"/>
<dbReference type="PDBsum" id="4EOL"/>
<dbReference type="PDBsum" id="4EOM"/>
<dbReference type="PDBsum" id="4EON"/>
<dbReference type="PDBsum" id="4EOO"/>
<dbReference type="PDBsum" id="4EOP"/>
<dbReference type="PDBsum" id="4EOQ"/>
<dbReference type="PDBsum" id="4EOR"/>
<dbReference type="PDBsum" id="4EOS"/>
<dbReference type="PDBsum" id="4FX3"/>
<dbReference type="PDBsum" id="5CYI"/>
<dbReference type="PDBsum" id="5IF1"/>
<dbReference type="PDBsum" id="5LMK"/>
<dbReference type="PDBsum" id="5NEV"/>
<dbReference type="PDBsum" id="6ATH"/>
<dbReference type="PDBsum" id="6GVA"/>
<dbReference type="PDBsum" id="6P3W"/>
<dbReference type="PDBsum" id="6Q6G"/>
<dbReference type="PDBsum" id="6Q6H"/>
<dbReference type="PDBsum" id="6RIJ"/>
<dbReference type="PDBsum" id="6SG4"/>
<dbReference type="PDBsum" id="7ACK"/>
<dbReference type="PDBsum" id="7B5L"/>
<dbReference type="PDBsum" id="7B5R"/>
<dbReference type="PDBsum" id="7B7S"/>
<dbReference type="PDBsum" id="7LUO"/>
<dbReference type="PDBsum" id="7MKX"/>
<dbReference type="PDBsum" id="7QHL"/>
<dbReference type="PDBsum" id="8B54"/>
<dbReference type="PDBsum" id="8BYA"/>
<dbReference type="PDBsum" id="8BZO"/>
<dbReference type="EMDB" id="EMD-12037"/>
<dbReference type="EMDB" id="EMD-12048"/>
<dbReference type="EMDB" id="EMD-16325"/>
<dbReference type="EMDB" id="EMD-16344"/>
<dbReference type="EMDB" id="EMD-4465"/>
<dbReference type="EMDB" id="EMD-4466"/>
<dbReference type="EMDB" id="EMD-4467"/>
<dbReference type="SMR" id="P20248"/>
<dbReference type="BioGRID" id="107331">
    <property type="interactions" value="183"/>
</dbReference>
<dbReference type="ComplexPortal" id="CPX-2004">
    <property type="entry name" value="Cyclin A2-CDK1 complex"/>
</dbReference>
<dbReference type="ComplexPortal" id="CPX-2006">
    <property type="entry name" value="Cyclin A2-CDK2 complex"/>
</dbReference>
<dbReference type="CORUM" id="P20248"/>
<dbReference type="DIP" id="DIP-638N"/>
<dbReference type="ELM" id="P20248"/>
<dbReference type="FunCoup" id="P20248">
    <property type="interactions" value="2344"/>
</dbReference>
<dbReference type="IntAct" id="P20248">
    <property type="interactions" value="102"/>
</dbReference>
<dbReference type="MINT" id="P20248"/>
<dbReference type="STRING" id="9606.ENSP00000481380"/>
<dbReference type="BindingDB" id="P20248"/>
<dbReference type="ChEMBL" id="CHEMBL2582"/>
<dbReference type="DrugBank" id="DB08463">
    <property type="generic name" value="(2R)-2-({9-(1-methylethyl)-6-[(4-pyridin-2-ylbenzyl)amino]-9H-purin-2-yl}amino)butan-1-ol"/>
</dbReference>
<dbReference type="DrugBank" id="DB08285">
    <property type="generic name" value="(2R)-2-{[4-(benzylamino)-8-(1-methylethyl)pyrazolo[1,5-a][1,3,5]triazin-2-yl]amino}butan-1-ol"/>
</dbReference>
<dbReference type="DrugBank" id="DB07137">
    <property type="generic name" value="(2S)-N-[(3E)-5-Cyclopropyl-3H-pyrazol-3-ylidene]-2-[4-(2-oxo-1-imidazolidinyl)phenyl]propanamide"/>
</dbReference>
<dbReference type="DrugBank" id="DB07852">
    <property type="generic name" value="1-(3,5-DICHLOROPHENYL)-5-METHYL-1H-1,2,4-TRIAZOLE-3-CARBOXYLIC ACID"/>
</dbReference>
<dbReference type="DrugBank" id="DB08527">
    <property type="generic name" value="1-[4-(AMINOSULFONYL)PHENYL]-1,6-DIHYDROPYRAZOLO[3,4-E]INDAZOLE-3-CARBOXAMIDE"/>
</dbReference>
<dbReference type="DrugBank" id="DB08355">
    <property type="generic name" value="1-methyl-8-(phenylamino)-4,5-dihydro-1H-pyrazolo[4,3-h]quinazoline-3-carboxylic acid"/>
</dbReference>
<dbReference type="DrugBank" id="DB06948">
    <property type="generic name" value="2-ANILINO-6-CYCLOHEXYLMETHOXYPURINE"/>
</dbReference>
<dbReference type="DrugBank" id="DB08248">
    <property type="generic name" value="3-(6-CYCLOHEXYLMETHOXY-9H-PURIN-2-YLAMINO)-BENZENESULFONAMIDE"/>
</dbReference>
<dbReference type="DrugBank" id="DB08309">
    <property type="generic name" value="3-({2-[(4-{[6-(CYCLOHEXYLMETHOXY)-9H-PURIN-2-YL]AMINO}PHENYL)SULFONYL]ETHYL}AMINO)PROPAN-1-OL"/>
</dbReference>
<dbReference type="DrugBank" id="DB02915">
    <property type="generic name" value="4-(2,4-Dimethyl-1,3-thiazol-5-yl)-N-[4-(trifluoromethyl)phenyl]-2-pyrimidinamine"/>
</dbReference>
<dbReference type="DrugBank" id="DB02091">
    <property type="generic name" value="4-(2,4-Dimethyl-Thiazol-5-Yl)-Pyrimidin-2-Ylamine"/>
</dbReference>
<dbReference type="DrugBank" id="DB08178">
    <property type="generic name" value="4-(4-methoxy-1H-pyrrolo[2,3-b]pyridin-3-yl)pyrimidin-2-amine"/>
</dbReference>
<dbReference type="DrugBank" id="DB08182">
    <property type="generic name" value="4-(4-propoxy-1H-pyrrolo[2,3-b]pyridin-3-yl)pyrimidin-2-amine"/>
</dbReference>
<dbReference type="DrugBank" id="DB08241">
    <property type="generic name" value="4-(6-CYCLOHEXYLMETHOXY-9H-PURIN-2-YLAMINO)--BENZAMIDE"/>
</dbReference>
<dbReference type="DrugBank" id="DB06844">
    <property type="generic name" value="4-[(7-OXO-7H-THIAZOLO[5,4-E]INDOL-8-YLMETHYL)-AMINO]-N-PYRIDIN-2-YL-BENZENESULFONAMIDE"/>
</dbReference>
<dbReference type="DrugBank" id="DB08219">
    <property type="generic name" value="4-Methyl-5-[(2Z)-2-{[4-(4-morpholinyl)phenyl]imino}-2,5-dihydro-4-pyrimidinyl]-1,3-thiazol-2-amine"/>
</dbReference>
<dbReference type="DrugBank" id="DB07533">
    <property type="generic name" value="4-{5-[(Z)-(2-Imino-4-Oxo-1,3-Thiazolidin-5-Ylidene)methyl]-2-Furyl}-N-Methylbenzenesulfonamide"/>
</dbReference>
<dbReference type="DrugBank" id="DB07538">
    <property type="generic name" value="4-{5-[(Z)-(2-IMINO-4-OXO-1,3-THIAZOLIDIN-5-YLIDENE)METHYL]FURAN-2-YL}-2-(TRIFLUOROMETHYL)BENZENESULFONAMIDE"/>
</dbReference>
<dbReference type="DrugBank" id="DB07534">
    <property type="generic name" value="4-{5-[(Z)-(2-Imino-4-Oxo-1,3-Thiazolidin-5-Ylidene)methyl]furan-2-Yl}benzenesulfonamide"/>
</dbReference>
<dbReference type="DrugBank" id="DB07539">
    <property type="generic name" value="4-{5-[(Z)-(2-IMINO-4-OXO-1,3-THIAZOLIDIN-5-YLIDENE)METHYL]FURAN-2-YL}BENZOIC ACID"/>
</dbReference>
<dbReference type="DrugBank" id="DB08572">
    <property type="generic name" value="4-{[4-AMINO-6-(CYCLOHEXYLMETHOXY)-5-NITROSOPYRIMIDIN-2-YL]AMINO}BENZAMIDE"/>
</dbReference>
<dbReference type="DrugBank" id="DB07688">
    <property type="generic name" value="4-{[5-(CYCLOHEXYLOXY)[1,2,4]TRIAZOLO[1,5-A]PYRIMIDIN-7-YL]AMINO}BENZENESULFONAMIDE"/>
</dbReference>
<dbReference type="DrugBank" id="DB07471">
    <property type="generic name" value="5-[5,6-BIS(METHYLOXY)-1H-BENZIMIDAZOL-1-YL]-3-{[1-(2-CHLOROPHENYL)ETHYL]OXY}-2-THIOPHENECARBOXAMIDE"/>
</dbReference>
<dbReference type="DrugBank" id="DB07203">
    <property type="generic name" value="6-CYCLOHEXYLMETHOXY-2-(3'-CHLOROANILINO) PURINE"/>
</dbReference>
<dbReference type="DrugBank" id="DB08233">
    <property type="generic name" value="6-CYCLOHEXYLMETHYLOXY-2-(4'-HYDROXYANILINO)PURINE"/>
</dbReference>
<dbReference type="DrugBank" id="DB02407">
    <property type="generic name" value="6-O-Cyclohexylmethyl Guanine"/>
</dbReference>
<dbReference type="DrugBank" id="DB02833">
    <property type="generic name" value="[4-(2-Amino-4-Methyl-Thiazol-5-Yl)-Pyrimidin-2-Yl]-(3-Nitro-Phenyl)-Amine"/>
</dbReference>
<dbReference type="DrugBank" id="DB08218">
    <property type="generic name" value="HYDROXY(OXO)(3-{[(2Z)-4-[3-(1H-1,2,4-TRIAZOL-1-YLMETHYL)PHENYL]PYRIMIDIN-2(5H)-YLIDENE]AMINO}PHENYL)AMMONIUM"/>
</dbReference>
<dbReference type="DrugBank" id="DB06944">
    <property type="generic name" value="N-(3-cyclopropyl-1H-pyrazol-5-yl)-2-(2-naphthyl)acetamide"/>
</dbReference>
<dbReference type="DrugBank" id="DB07562">
    <property type="generic name" value="N-[4-(2,4-DIMETHYL-THIAZOL-5-YL)-PYRIMIDIN-2-YL]-N',N'-DIMETHYL-BENZENE-1,4-DIAMINE"/>
</dbReference>
<dbReference type="DrugBank" id="DB07164">
    <property type="generic name" value="N-cyclopropyl-4-pyrazolo[1,5-b]pyridazin-3-ylpyrimidin-2-amine"/>
</dbReference>
<dbReference type="DrugBank" id="DB07126">
    <property type="generic name" value="O6-CYCLOHEXYLMETHOXY-2-(4'-SULPHAMOYLANILINO) PURINE"/>
</dbReference>
<dbReference type="DrugBank" id="DB08694">
    <property type="generic name" value="Variolin B"/>
</dbReference>
<dbReference type="DrugCentral" id="P20248"/>
<dbReference type="iPTMnet" id="P20248"/>
<dbReference type="MetOSite" id="P20248"/>
<dbReference type="PhosphoSitePlus" id="P20248"/>
<dbReference type="BioMuta" id="CCNA2"/>
<dbReference type="DMDM" id="311033358"/>
<dbReference type="jPOST" id="P20248"/>
<dbReference type="MassIVE" id="P20248"/>
<dbReference type="PaxDb" id="9606-ENSP00000274026"/>
<dbReference type="PeptideAtlas" id="P20248"/>
<dbReference type="ProteomicsDB" id="53735"/>
<dbReference type="Pumba" id="P20248"/>
<dbReference type="Antibodypedia" id="3665">
    <property type="antibodies" value="802 antibodies from 44 providers"/>
</dbReference>
<dbReference type="DNASU" id="890"/>
<dbReference type="Ensembl" id="ENST00000274026.10">
    <property type="protein sequence ID" value="ENSP00000274026.5"/>
    <property type="gene ID" value="ENSG00000145386.11"/>
</dbReference>
<dbReference type="GeneID" id="890"/>
<dbReference type="KEGG" id="hsa:890"/>
<dbReference type="MANE-Select" id="ENST00000274026.10">
    <property type="protein sequence ID" value="ENSP00000274026.5"/>
    <property type="RefSeq nucleotide sequence ID" value="NM_001237.5"/>
    <property type="RefSeq protein sequence ID" value="NP_001228.2"/>
</dbReference>
<dbReference type="UCSC" id="uc003iec.5">
    <property type="organism name" value="human"/>
</dbReference>
<dbReference type="AGR" id="HGNC:1578"/>
<dbReference type="CTD" id="890"/>
<dbReference type="DisGeNET" id="890"/>
<dbReference type="GeneCards" id="CCNA2"/>
<dbReference type="HGNC" id="HGNC:1578">
    <property type="gene designation" value="CCNA2"/>
</dbReference>
<dbReference type="HPA" id="ENSG00000145386">
    <property type="expression patterns" value="Tissue enhanced (bone marrow, lymphoid tissue, retina)"/>
</dbReference>
<dbReference type="MalaCards" id="CCNA2"/>
<dbReference type="MIM" id="123835">
    <property type="type" value="gene"/>
</dbReference>
<dbReference type="neXtProt" id="NX_P20248"/>
<dbReference type="OpenTargets" id="ENSG00000145386"/>
<dbReference type="PharmGKB" id="PA94"/>
<dbReference type="VEuPathDB" id="HostDB:ENSG00000145386"/>
<dbReference type="eggNOG" id="KOG0654">
    <property type="taxonomic scope" value="Eukaryota"/>
</dbReference>
<dbReference type="GeneTree" id="ENSGT00940000155372"/>
<dbReference type="HOGENOM" id="CLU_020695_3_2_1"/>
<dbReference type="InParanoid" id="P20248"/>
<dbReference type="OMA" id="YCRAAQH"/>
<dbReference type="OrthoDB" id="5590282at2759"/>
<dbReference type="PAN-GO" id="P20248">
    <property type="GO annotations" value="6 GO annotations based on evolutionary models"/>
</dbReference>
<dbReference type="PhylomeDB" id="P20248"/>
<dbReference type="TreeFam" id="TF101002"/>
<dbReference type="PathwayCommons" id="P20248"/>
<dbReference type="Reactome" id="R-HSA-1362300">
    <property type="pathway name" value="Transcription of E2F targets under negative control by p107 (RBL1) and p130 (RBL2) in complex with HDAC1"/>
</dbReference>
<dbReference type="Reactome" id="R-HSA-1538133">
    <property type="pathway name" value="G0 and Early G1"/>
</dbReference>
<dbReference type="Reactome" id="R-HSA-170145">
    <property type="pathway name" value="Phosphorylation of proteins involved in the G2/M transition by Cyclin A:Cdc2 complexes"/>
</dbReference>
<dbReference type="Reactome" id="R-HSA-171319">
    <property type="pathway name" value="Telomere Extension By Telomerase"/>
</dbReference>
<dbReference type="Reactome" id="R-HSA-174184">
    <property type="pathway name" value="Cdc20:Phospho-APC/C mediated degradation of Cyclin A"/>
</dbReference>
<dbReference type="Reactome" id="R-HSA-176408">
    <property type="pathway name" value="Regulation of APC/C activators between G1/S and early anaphase"/>
</dbReference>
<dbReference type="Reactome" id="R-HSA-187577">
    <property type="pathway name" value="SCF(Skp2)-mediated degradation of p27/p21"/>
</dbReference>
<dbReference type="Reactome" id="R-HSA-2559582">
    <property type="pathway name" value="Senescence-Associated Secretory Phenotype (SASP)"/>
</dbReference>
<dbReference type="Reactome" id="R-HSA-2559586">
    <property type="pathway name" value="DNA Damage/Telomere Stress Induced Senescence"/>
</dbReference>
<dbReference type="Reactome" id="R-HSA-5689880">
    <property type="pathway name" value="Ub-specific processing proteases"/>
</dbReference>
<dbReference type="Reactome" id="R-HSA-5693607">
    <property type="pathway name" value="Processing of DNA double-strand break ends"/>
</dbReference>
<dbReference type="Reactome" id="R-HSA-6804116">
    <property type="pathway name" value="TP53 Regulates Transcription of Genes Involved in G1 Cell Cycle Arrest"/>
</dbReference>
<dbReference type="Reactome" id="R-HSA-6804756">
    <property type="pathway name" value="Regulation of TP53 Activity through Phosphorylation"/>
</dbReference>
<dbReference type="Reactome" id="R-HSA-6804757">
    <property type="pathway name" value="Regulation of TP53 Degradation"/>
</dbReference>
<dbReference type="Reactome" id="R-HSA-68911">
    <property type="pathway name" value="G2 Phase"/>
</dbReference>
<dbReference type="Reactome" id="R-HSA-68949">
    <property type="pathway name" value="Orc1 removal from chromatin"/>
</dbReference>
<dbReference type="Reactome" id="R-HSA-69017">
    <property type="pathway name" value="CDK-mediated phosphorylation and removal of Cdc6"/>
</dbReference>
<dbReference type="Reactome" id="R-HSA-69273">
    <property type="pathway name" value="Cyclin A/B1/B2 associated events during G2/M transition"/>
</dbReference>
<dbReference type="Reactome" id="R-HSA-69563">
    <property type="pathway name" value="p53-Dependent G1 DNA Damage Response"/>
</dbReference>
<dbReference type="Reactome" id="R-HSA-69656">
    <property type="pathway name" value="Cyclin A:Cdk2-associated events at S phase entry"/>
</dbReference>
<dbReference type="SignaLink" id="P20248"/>
<dbReference type="SIGNOR" id="P20248"/>
<dbReference type="BioGRID-ORCS" id="890">
    <property type="hits" value="802 hits in 1170 CRISPR screens"/>
</dbReference>
<dbReference type="CD-CODE" id="8C2F96ED">
    <property type="entry name" value="Centrosome"/>
</dbReference>
<dbReference type="EvolutionaryTrace" id="P20248"/>
<dbReference type="GeneWiki" id="Cyclin_A2"/>
<dbReference type="GenomeRNAi" id="890"/>
<dbReference type="Pharos" id="P20248">
    <property type="development level" value="Tchem"/>
</dbReference>
<dbReference type="PRO" id="PR:P20248"/>
<dbReference type="Proteomes" id="UP000005640">
    <property type="component" value="Chromosome 4"/>
</dbReference>
<dbReference type="RNAct" id="P20248">
    <property type="molecule type" value="protein"/>
</dbReference>
<dbReference type="Bgee" id="ENSG00000145386">
    <property type="expression patterns" value="Expressed in ventricular zone and 161 other cell types or tissues"/>
</dbReference>
<dbReference type="GO" id="GO:0097122">
    <property type="term" value="C:cyclin A2-CDK1 complex"/>
    <property type="evidence" value="ECO:0000303"/>
    <property type="project" value="ComplexPortal"/>
</dbReference>
<dbReference type="GO" id="GO:0097124">
    <property type="term" value="C:cyclin A2-CDK2 complex"/>
    <property type="evidence" value="ECO:0000314"/>
    <property type="project" value="UniProtKB"/>
</dbReference>
<dbReference type="GO" id="GO:0000307">
    <property type="term" value="C:cyclin-dependent protein kinase holoenzyme complex"/>
    <property type="evidence" value="ECO:0000314"/>
    <property type="project" value="UniProtKB"/>
</dbReference>
<dbReference type="GO" id="GO:0005737">
    <property type="term" value="C:cytoplasm"/>
    <property type="evidence" value="ECO:0000314"/>
    <property type="project" value="UniProtKB"/>
</dbReference>
<dbReference type="GO" id="GO:0005829">
    <property type="term" value="C:cytosol"/>
    <property type="evidence" value="ECO:0000314"/>
    <property type="project" value="HPA"/>
</dbReference>
<dbReference type="GO" id="GO:0001939">
    <property type="term" value="C:female pronucleus"/>
    <property type="evidence" value="ECO:0007669"/>
    <property type="project" value="Ensembl"/>
</dbReference>
<dbReference type="GO" id="GO:0001940">
    <property type="term" value="C:male pronucleus"/>
    <property type="evidence" value="ECO:0007669"/>
    <property type="project" value="Ensembl"/>
</dbReference>
<dbReference type="GO" id="GO:0005815">
    <property type="term" value="C:microtubule organizing center"/>
    <property type="evidence" value="ECO:0000318"/>
    <property type="project" value="GO_Central"/>
</dbReference>
<dbReference type="GO" id="GO:0005654">
    <property type="term" value="C:nucleoplasm"/>
    <property type="evidence" value="ECO:0000314"/>
    <property type="project" value="CAFA"/>
</dbReference>
<dbReference type="GO" id="GO:0005634">
    <property type="term" value="C:nucleus"/>
    <property type="evidence" value="ECO:0000314"/>
    <property type="project" value="UniProtKB"/>
</dbReference>
<dbReference type="GO" id="GO:0016538">
    <property type="term" value="F:cyclin-dependent protein serine/threonine kinase regulator activity"/>
    <property type="evidence" value="ECO:0000314"/>
    <property type="project" value="UniProtKB"/>
</dbReference>
<dbReference type="GO" id="GO:0019904">
    <property type="term" value="F:protein domain specific binding"/>
    <property type="evidence" value="ECO:0000353"/>
    <property type="project" value="CAFA"/>
</dbReference>
<dbReference type="GO" id="GO:0019901">
    <property type="term" value="F:protein kinase binding"/>
    <property type="evidence" value="ECO:0000353"/>
    <property type="project" value="UniProtKB"/>
</dbReference>
<dbReference type="GO" id="GO:0031100">
    <property type="term" value="P:animal organ regeneration"/>
    <property type="evidence" value="ECO:0007669"/>
    <property type="project" value="Ensembl"/>
</dbReference>
<dbReference type="GO" id="GO:0044843">
    <property type="term" value="P:cell cycle G1/S phase transition"/>
    <property type="evidence" value="ECO:0000314"/>
    <property type="project" value="UniProtKB"/>
</dbReference>
<dbReference type="GO" id="GO:0051301">
    <property type="term" value="P:cell division"/>
    <property type="evidence" value="ECO:0007669"/>
    <property type="project" value="UniProtKB-KW"/>
</dbReference>
<dbReference type="GO" id="GO:0071314">
    <property type="term" value="P:cellular response to cocaine"/>
    <property type="evidence" value="ECO:0007669"/>
    <property type="project" value="Ensembl"/>
</dbReference>
<dbReference type="GO" id="GO:0071392">
    <property type="term" value="P:cellular response to estradiol stimulus"/>
    <property type="evidence" value="ECO:0007669"/>
    <property type="project" value="Ensembl"/>
</dbReference>
<dbReference type="GO" id="GO:0071456">
    <property type="term" value="P:cellular response to hypoxia"/>
    <property type="evidence" value="ECO:0007669"/>
    <property type="project" value="Ensembl"/>
</dbReference>
<dbReference type="GO" id="GO:1990314">
    <property type="term" value="P:cellular response to insulin-like growth factor stimulus"/>
    <property type="evidence" value="ECO:0007669"/>
    <property type="project" value="Ensembl"/>
</dbReference>
<dbReference type="GO" id="GO:0044320">
    <property type="term" value="P:cellular response to leptin stimulus"/>
    <property type="evidence" value="ECO:0007669"/>
    <property type="project" value="Ensembl"/>
</dbReference>
<dbReference type="GO" id="GO:0071373">
    <property type="term" value="P:cellular response to luteinizing hormone stimulus"/>
    <property type="evidence" value="ECO:0007669"/>
    <property type="project" value="Ensembl"/>
</dbReference>
<dbReference type="GO" id="GO:0071732">
    <property type="term" value="P:cellular response to nitric oxide"/>
    <property type="evidence" value="ECO:0007669"/>
    <property type="project" value="Ensembl"/>
</dbReference>
<dbReference type="GO" id="GO:0036120">
    <property type="term" value="P:cellular response to platelet-derived growth factor stimulus"/>
    <property type="evidence" value="ECO:0007669"/>
    <property type="project" value="Ensembl"/>
</dbReference>
<dbReference type="GO" id="GO:0090102">
    <property type="term" value="P:cochlea development"/>
    <property type="evidence" value="ECO:0007669"/>
    <property type="project" value="Ensembl"/>
</dbReference>
<dbReference type="GO" id="GO:0006351">
    <property type="term" value="P:DNA-templated transcription"/>
    <property type="evidence" value="ECO:0007669"/>
    <property type="project" value="Ensembl"/>
</dbReference>
<dbReference type="GO" id="GO:0000082">
    <property type="term" value="P:G1/S transition of mitotic cell cycle"/>
    <property type="evidence" value="ECO:0000318"/>
    <property type="project" value="GO_Central"/>
</dbReference>
<dbReference type="GO" id="GO:0000086">
    <property type="term" value="P:G2/M transition of mitotic cell cycle"/>
    <property type="evidence" value="ECO:0000314"/>
    <property type="project" value="UniProtKB"/>
</dbReference>
<dbReference type="GO" id="GO:2000573">
    <property type="term" value="P:positive regulation of DNA biosynthetic process"/>
    <property type="evidence" value="ECO:0007669"/>
    <property type="project" value="Ensembl"/>
</dbReference>
<dbReference type="GO" id="GO:0045893">
    <property type="term" value="P:positive regulation of DNA-templated transcription"/>
    <property type="evidence" value="ECO:0007669"/>
    <property type="project" value="Ensembl"/>
</dbReference>
<dbReference type="GO" id="GO:0048146">
    <property type="term" value="P:positive regulation of fibroblast proliferation"/>
    <property type="evidence" value="ECO:0007669"/>
    <property type="project" value="Ensembl"/>
</dbReference>
<dbReference type="GO" id="GO:0043687">
    <property type="term" value="P:post-translational protein modification"/>
    <property type="evidence" value="ECO:0000314"/>
    <property type="project" value="CAFA"/>
</dbReference>
<dbReference type="GO" id="GO:0007265">
    <property type="term" value="P:Ras protein signal transduction"/>
    <property type="evidence" value="ECO:0000270"/>
    <property type="project" value="BHF-UCL"/>
</dbReference>
<dbReference type="GO" id="GO:0006275">
    <property type="term" value="P:regulation of DNA replication"/>
    <property type="evidence" value="ECO:0000315"/>
    <property type="project" value="UniProtKB"/>
</dbReference>
<dbReference type="GO" id="GO:0033762">
    <property type="term" value="P:response to glucagon"/>
    <property type="evidence" value="ECO:0007669"/>
    <property type="project" value="Ensembl"/>
</dbReference>
<dbReference type="CDD" id="cd20561">
    <property type="entry name" value="CYCLIN_CCNA2_rpt1"/>
    <property type="match status" value="1"/>
</dbReference>
<dbReference type="CDD" id="cd20564">
    <property type="entry name" value="CYCLIN_CCNA2_rpt2"/>
    <property type="match status" value="1"/>
</dbReference>
<dbReference type="FunFam" id="1.10.472.10:FF:000037">
    <property type="entry name" value="Cyclin-A2"/>
    <property type="match status" value="1"/>
</dbReference>
<dbReference type="Gene3D" id="1.10.472.10">
    <property type="entry name" value="Cyclin-like"/>
    <property type="match status" value="2"/>
</dbReference>
<dbReference type="IDEAL" id="IID00032"/>
<dbReference type="InterPro" id="IPR039361">
    <property type="entry name" value="Cyclin"/>
</dbReference>
<dbReference type="InterPro" id="IPR032447">
    <property type="entry name" value="Cyclin-A_N"/>
</dbReference>
<dbReference type="InterPro" id="IPR013763">
    <property type="entry name" value="Cyclin-like_dom"/>
</dbReference>
<dbReference type="InterPro" id="IPR036915">
    <property type="entry name" value="Cyclin-like_sf"/>
</dbReference>
<dbReference type="InterPro" id="IPR046965">
    <property type="entry name" value="Cyclin_A/B-like"/>
</dbReference>
<dbReference type="InterPro" id="IPR004367">
    <property type="entry name" value="Cyclin_C-dom"/>
</dbReference>
<dbReference type="InterPro" id="IPR006671">
    <property type="entry name" value="Cyclin_N"/>
</dbReference>
<dbReference type="InterPro" id="IPR048258">
    <property type="entry name" value="Cyclins_cyclin-box"/>
</dbReference>
<dbReference type="PANTHER" id="PTHR10177">
    <property type="entry name" value="CYCLINS"/>
    <property type="match status" value="1"/>
</dbReference>
<dbReference type="Pfam" id="PF02984">
    <property type="entry name" value="Cyclin_C"/>
    <property type="match status" value="1"/>
</dbReference>
<dbReference type="Pfam" id="PF00134">
    <property type="entry name" value="Cyclin_N"/>
    <property type="match status" value="1"/>
</dbReference>
<dbReference type="Pfam" id="PF16500">
    <property type="entry name" value="Cyclin_N2"/>
    <property type="match status" value="1"/>
</dbReference>
<dbReference type="PIRSF" id="PIRSF001771">
    <property type="entry name" value="Cyclin_A_B_D_E"/>
    <property type="match status" value="1"/>
</dbReference>
<dbReference type="SMART" id="SM00385">
    <property type="entry name" value="CYCLIN"/>
    <property type="match status" value="2"/>
</dbReference>
<dbReference type="SMART" id="SM01332">
    <property type="entry name" value="Cyclin_C"/>
    <property type="match status" value="1"/>
</dbReference>
<dbReference type="SUPFAM" id="SSF47954">
    <property type="entry name" value="Cyclin-like"/>
    <property type="match status" value="2"/>
</dbReference>
<dbReference type="PROSITE" id="PS00292">
    <property type="entry name" value="CYCLINS"/>
    <property type="match status" value="1"/>
</dbReference>
<comment type="function">
    <text evidence="2">Cyclin which controls both the G1/S and the G2/M transition phases of the cell cycle. Functions through the formation of specific serine/threonine protein kinase holoenzyme complexes with the cyclin-dependent protein kinases CDK1 or CDK2. The cyclin subunit confers the substrate specificity of these complexes and differentially interacts with and activates CDK1 and CDK2 throughout the cell cycle.</text>
</comment>
<comment type="subunit">
    <text evidence="2 5 7 11 13 14">Interacts with the CDK1 and CDK2 protein kinases to form serine/threonine kinase holoenzyme complexes (PubMed:1312467, PubMed:7630397, PubMed:8684460, PubMed:8756328). Interacts with CDK1 (hyperphosphorylated form in G1 and underphosphorylated forms in S and G2) (PubMed:1312467). Interacts with CDK2; the interaction increases from G1 to G2 (PubMed:1312467). Interacts (associated with CDK2 but not with CDK1) with SCAPER; regulates the activity of CCNA2/CDK2 by transiently maintaining CCNA2 in the cytoplasm (PubMed:17698606). Forms a ternary complex with CDK2 and CDKN1B; CDKN1B inhibits the kinase activity of CDK2 through conformational rearrangements (PubMed:8684460). Interacts with INCA1 (PubMed:21540187).</text>
</comment>
<comment type="subunit">
    <text evidence="9">(Microbial infection) Interacts with human cytomegalovirus protein UL32.</text>
</comment>
<comment type="interaction">
    <interactant intactId="EBI-457097">
        <id>P20248</id>
    </interactant>
    <interactant intactId="EBI-296087">
        <id>P31749</id>
        <label>AKT1</label>
    </interactant>
    <organismsDiffer>false</organismsDiffer>
    <experiments>2</experiments>
</comment>
<comment type="interaction">
    <interactant intactId="EBI-457097">
        <id>P20248</id>
    </interactant>
    <interactant intactId="EBI-375096">
        <id>P24941</id>
        <label>CDK2</label>
    </interactant>
    <organismsDiffer>false</organismsDiffer>
    <experiments>33</experiments>
</comment>
<comment type="interaction">
    <interactant intactId="EBI-457097">
        <id>P20248</id>
    </interactant>
    <interactant intactId="EBI-375077">
        <id>P38936</id>
        <label>CDKN1A</label>
    </interactant>
    <organismsDiffer>false</organismsDiffer>
    <experiments>8</experiments>
</comment>
<comment type="interaction">
    <interactant intactId="EBI-457097">
        <id>P20248</id>
    </interactant>
    <interactant intactId="EBI-519280">
        <id>P46527</id>
        <label>CDKN1B</label>
    </interactant>
    <organismsDiffer>false</organismsDiffer>
    <experiments>21</experiments>
</comment>
<comment type="interaction">
    <interactant intactId="EBI-457097">
        <id>P20248</id>
    </interactant>
    <interactant intactId="EBI-625304">
        <id>Q96PU4</id>
        <label>UHRF2</label>
    </interactant>
    <organismsDiffer>false</organismsDiffer>
    <experiments>2</experiments>
</comment>
<comment type="interaction">
    <interactant intactId="EBI-457097">
        <id>P20248</id>
    </interactant>
    <interactant intactId="EBI-866453">
        <id>P03129</id>
        <label>E7</label>
    </interactant>
    <organismsDiffer>true</organismsDiffer>
    <experiments>2</experiments>
</comment>
<comment type="interaction">
    <interactant intactId="EBI-457097">
        <id>P20248</id>
    </interactant>
    <interactant intactId="EBI-617698">
        <id>P03070</id>
    </interactant>
    <organismsDiffer>true</organismsDiffer>
    <experiments>2</experiments>
</comment>
<comment type="subcellular location">
    <subcellularLocation>
        <location evidence="2 5">Nucleus</location>
    </subcellularLocation>
    <subcellularLocation>
        <location evidence="2 5">Cytoplasm</location>
    </subcellularLocation>
    <text evidence="2 5">Exclusively nuclear during interphase (PubMed:1312467). Detected in the nucleus and the cytoplasm at prophase (PubMed:1312467). Cytoplasmic when associated with SCAPER (PubMed:17698606).</text>
</comment>
<comment type="developmental stage">
    <text evidence="2">Accumulates steadily during G2 and is abruptly destroyed at mitosis. Not detected during the G1 phase of the cell cycle. It accumulates during the DNA synthesis/S phase and disappears as cells progress into mitosis, between prophase and metaphase (at protein level).</text>
</comment>
<comment type="PTM">
    <text evidence="8 10">Polyubiquitinated via 'Lys-11'-linked ubiquitin by the anaphase-promoting complex (APC/C), leading to its degradation by the proteasome (PubMed:21596315). Deubiquitinated and stabilized by USP37 enables entry into S phase (PubMed:21596315). Ubiquitinated during the G1 phase by the SCF(FBXO31) complex, leading to its proteasomal degradation (PubMed:31413110).</text>
</comment>
<comment type="similarity">
    <text evidence="19">Belongs to the cyclin family. Cyclin AB subfamily.</text>
</comment>